<feature type="chain" id="PRO_0000077176" description="Large ribosomal subunit protein uL3">
    <location>
        <begin position="1"/>
        <end position="218"/>
    </location>
</feature>
<feature type="region of interest" description="Disordered" evidence="2">
    <location>
        <begin position="121"/>
        <end position="163"/>
    </location>
</feature>
<keyword id="KW-0687">Ribonucleoprotein</keyword>
<keyword id="KW-0689">Ribosomal protein</keyword>
<keyword id="KW-0694">RNA-binding</keyword>
<keyword id="KW-0699">rRNA-binding</keyword>
<name>RL3_PARMW</name>
<comment type="function">
    <text evidence="1">One of the primary rRNA binding proteins, it binds directly near the 3'-end of the 23S rRNA, where it nucleates assembly of the 50S subunit.</text>
</comment>
<comment type="subunit">
    <text evidence="1">Part of the 50S ribosomal subunit. Forms a cluster with proteins L14 and L19.</text>
</comment>
<comment type="similarity">
    <text evidence="1">Belongs to the universal ribosomal protein uL3 family.</text>
</comment>
<sequence>MSIGILGKKLGMSQFFDEQGRAVPVTLIEAGPCRITQLKSSDTDGYAAVQIGFGDTREKLINKPAKGHLNKTGETLLRHLREYRVDGLDGFELGGSITVGDFEAGQKVDVSGDTIGRGFSGYQKRHGFSRGPMTHGSKNHREPGSIGPGTTPGRIYPGKRMAGRYGGKKITTRGLTILKVDSERNLLVVKGSVPGKPGALLNIRPALRVGAKPAKGGQ</sequence>
<protein>
    <recommendedName>
        <fullName evidence="1">Large ribosomal subunit protein uL3</fullName>
    </recommendedName>
    <alternativeName>
        <fullName evidence="3">50S ribosomal protein L3</fullName>
    </alternativeName>
</protein>
<organism>
    <name type="scientific">Parasynechococcus marenigrum (strain WH8102)</name>
    <dbReference type="NCBI Taxonomy" id="84588"/>
    <lineage>
        <taxon>Bacteria</taxon>
        <taxon>Bacillati</taxon>
        <taxon>Cyanobacteriota</taxon>
        <taxon>Cyanophyceae</taxon>
        <taxon>Synechococcales</taxon>
        <taxon>Prochlorococcaceae</taxon>
        <taxon>Parasynechococcus</taxon>
        <taxon>Parasynechococcus marenigrum</taxon>
    </lineage>
</organism>
<reference key="1">
    <citation type="journal article" date="2003" name="Nature">
        <title>The genome of a motile marine Synechococcus.</title>
        <authorList>
            <person name="Palenik B."/>
            <person name="Brahamsha B."/>
            <person name="Larimer F.W."/>
            <person name="Land M.L."/>
            <person name="Hauser L."/>
            <person name="Chain P."/>
            <person name="Lamerdin J.E."/>
            <person name="Regala W."/>
            <person name="Allen E.E."/>
            <person name="McCarren J."/>
            <person name="Paulsen I.T."/>
            <person name="Dufresne A."/>
            <person name="Partensky F."/>
            <person name="Webb E.A."/>
            <person name="Waterbury J."/>
        </authorList>
    </citation>
    <scope>NUCLEOTIDE SEQUENCE [LARGE SCALE GENOMIC DNA]</scope>
    <source>
        <strain>WH8102</strain>
    </source>
</reference>
<evidence type="ECO:0000255" key="1">
    <source>
        <dbReference type="HAMAP-Rule" id="MF_01325"/>
    </source>
</evidence>
<evidence type="ECO:0000256" key="2">
    <source>
        <dbReference type="SAM" id="MobiDB-lite"/>
    </source>
</evidence>
<evidence type="ECO:0000305" key="3"/>
<accession>Q7U4K0</accession>
<gene>
    <name evidence="1" type="primary">rplC</name>
    <name evidence="1" type="synonym">rpl3</name>
    <name type="ordered locus">SYNW2067</name>
</gene>
<dbReference type="EMBL" id="BX569694">
    <property type="protein sequence ID" value="CAE08582.1"/>
    <property type="molecule type" value="Genomic_DNA"/>
</dbReference>
<dbReference type="RefSeq" id="WP_011128925.1">
    <property type="nucleotide sequence ID" value="NC_005070.1"/>
</dbReference>
<dbReference type="SMR" id="Q7U4K0"/>
<dbReference type="STRING" id="84588.SYNW2067"/>
<dbReference type="KEGG" id="syw:SYNW2067"/>
<dbReference type="eggNOG" id="COG0087">
    <property type="taxonomic scope" value="Bacteria"/>
</dbReference>
<dbReference type="HOGENOM" id="CLU_044142_4_1_3"/>
<dbReference type="Proteomes" id="UP000001422">
    <property type="component" value="Chromosome"/>
</dbReference>
<dbReference type="GO" id="GO:0022625">
    <property type="term" value="C:cytosolic large ribosomal subunit"/>
    <property type="evidence" value="ECO:0007669"/>
    <property type="project" value="TreeGrafter"/>
</dbReference>
<dbReference type="GO" id="GO:0019843">
    <property type="term" value="F:rRNA binding"/>
    <property type="evidence" value="ECO:0007669"/>
    <property type="project" value="UniProtKB-UniRule"/>
</dbReference>
<dbReference type="GO" id="GO:0003735">
    <property type="term" value="F:structural constituent of ribosome"/>
    <property type="evidence" value="ECO:0007669"/>
    <property type="project" value="InterPro"/>
</dbReference>
<dbReference type="GO" id="GO:0006412">
    <property type="term" value="P:translation"/>
    <property type="evidence" value="ECO:0007669"/>
    <property type="project" value="UniProtKB-UniRule"/>
</dbReference>
<dbReference type="FunFam" id="3.30.160.810:FF:000001">
    <property type="entry name" value="50S ribosomal protein L3"/>
    <property type="match status" value="1"/>
</dbReference>
<dbReference type="FunFam" id="2.40.30.10:FF:000065">
    <property type="entry name" value="50S ribosomal protein L3, chloroplastic"/>
    <property type="match status" value="1"/>
</dbReference>
<dbReference type="Gene3D" id="3.30.160.810">
    <property type="match status" value="1"/>
</dbReference>
<dbReference type="Gene3D" id="2.40.30.10">
    <property type="entry name" value="Translation factors"/>
    <property type="match status" value="1"/>
</dbReference>
<dbReference type="HAMAP" id="MF_01325_B">
    <property type="entry name" value="Ribosomal_uL3_B"/>
    <property type="match status" value="1"/>
</dbReference>
<dbReference type="InterPro" id="IPR000597">
    <property type="entry name" value="Ribosomal_uL3"/>
</dbReference>
<dbReference type="InterPro" id="IPR019927">
    <property type="entry name" value="Ribosomal_uL3_bac/org-type"/>
</dbReference>
<dbReference type="InterPro" id="IPR019926">
    <property type="entry name" value="Ribosomal_uL3_CS"/>
</dbReference>
<dbReference type="InterPro" id="IPR009000">
    <property type="entry name" value="Transl_B-barrel_sf"/>
</dbReference>
<dbReference type="NCBIfam" id="TIGR03625">
    <property type="entry name" value="L3_bact"/>
    <property type="match status" value="1"/>
</dbReference>
<dbReference type="PANTHER" id="PTHR11229">
    <property type="entry name" value="50S RIBOSOMAL PROTEIN L3"/>
    <property type="match status" value="1"/>
</dbReference>
<dbReference type="PANTHER" id="PTHR11229:SF16">
    <property type="entry name" value="LARGE RIBOSOMAL SUBUNIT PROTEIN UL3C"/>
    <property type="match status" value="1"/>
</dbReference>
<dbReference type="Pfam" id="PF00297">
    <property type="entry name" value="Ribosomal_L3"/>
    <property type="match status" value="1"/>
</dbReference>
<dbReference type="SUPFAM" id="SSF50447">
    <property type="entry name" value="Translation proteins"/>
    <property type="match status" value="1"/>
</dbReference>
<dbReference type="PROSITE" id="PS00474">
    <property type="entry name" value="RIBOSOMAL_L3"/>
    <property type="match status" value="1"/>
</dbReference>
<proteinExistence type="inferred from homology"/>